<reference key="1">
    <citation type="journal article" date="2008" name="J. Bacteriol.">
        <title>The complete genome sequence of Thermococcus onnurineus NA1 reveals a mixed heterotrophic and carboxydotrophic metabolism.</title>
        <authorList>
            <person name="Lee H.S."/>
            <person name="Kang S.G."/>
            <person name="Bae S.S."/>
            <person name="Lim J.K."/>
            <person name="Cho Y."/>
            <person name="Kim Y.J."/>
            <person name="Jeon J.H."/>
            <person name="Cha S.-S."/>
            <person name="Kwon K.K."/>
            <person name="Kim H.-T."/>
            <person name="Park C.-J."/>
            <person name="Lee H.-W."/>
            <person name="Kim S.I."/>
            <person name="Chun J."/>
            <person name="Colwell R.R."/>
            <person name="Kim S.-J."/>
            <person name="Lee J.-H."/>
        </authorList>
    </citation>
    <scope>NUCLEOTIDE SEQUENCE [LARGE SCALE GENOMIC DNA]</scope>
    <source>
        <strain>NA1</strain>
    </source>
</reference>
<organism>
    <name type="scientific">Thermococcus onnurineus (strain NA1)</name>
    <dbReference type="NCBI Taxonomy" id="523850"/>
    <lineage>
        <taxon>Archaea</taxon>
        <taxon>Methanobacteriati</taxon>
        <taxon>Methanobacteriota</taxon>
        <taxon>Thermococci</taxon>
        <taxon>Thermococcales</taxon>
        <taxon>Thermococcaceae</taxon>
        <taxon>Thermococcus</taxon>
    </lineage>
</organism>
<feature type="chain" id="PRO_1000193988" description="Large ribosomal subunit protein eL24">
    <location>
        <begin position="1"/>
        <end position="68"/>
    </location>
</feature>
<feature type="zinc finger region" description="C4-type" evidence="1">
    <location>
        <begin position="7"/>
        <end position="37"/>
    </location>
</feature>
<feature type="binding site" evidence="1">
    <location>
        <position position="7"/>
    </location>
    <ligand>
        <name>Zn(2+)</name>
        <dbReference type="ChEBI" id="CHEBI:29105"/>
    </ligand>
</feature>
<feature type="binding site" evidence="1">
    <location>
        <position position="10"/>
    </location>
    <ligand>
        <name>Zn(2+)</name>
        <dbReference type="ChEBI" id="CHEBI:29105"/>
    </ligand>
</feature>
<feature type="binding site" evidence="1">
    <location>
        <position position="33"/>
    </location>
    <ligand>
        <name>Zn(2+)</name>
        <dbReference type="ChEBI" id="CHEBI:29105"/>
    </ligand>
</feature>
<feature type="binding site" evidence="1">
    <location>
        <position position="37"/>
    </location>
    <ligand>
        <name>Zn(2+)</name>
        <dbReference type="ChEBI" id="CHEBI:29105"/>
    </ligand>
</feature>
<proteinExistence type="inferred from homology"/>
<protein>
    <recommendedName>
        <fullName evidence="1">Large ribosomal subunit protein eL24</fullName>
    </recommendedName>
    <alternativeName>
        <fullName evidence="2">50S ribosomal protein L24e</fullName>
    </alternativeName>
</protein>
<name>RL24E_THEON</name>
<sequence>MPRWNVCSYCGREFEPGTGKMFVRNDGRVLFFCSSKCEKYYFMGRNPRKLKWTKAFQEARLQRAKRRK</sequence>
<evidence type="ECO:0000255" key="1">
    <source>
        <dbReference type="HAMAP-Rule" id="MF_00773"/>
    </source>
</evidence>
<evidence type="ECO:0000305" key="2"/>
<gene>
    <name evidence="1" type="primary">rpl24e</name>
    <name type="ordered locus">TON_0952</name>
</gene>
<comment type="function">
    <text evidence="1">Binds to the 23S rRNA.</text>
</comment>
<comment type="cofactor">
    <cofactor evidence="1">
        <name>Zn(2+)</name>
        <dbReference type="ChEBI" id="CHEBI:29105"/>
    </cofactor>
    <text evidence="1">Binds 1 zinc ion per subunit.</text>
</comment>
<comment type="subunit">
    <text evidence="1">Part of the 50S ribosomal subunit. Forms a cluster with proteins L3 and L14.</text>
</comment>
<comment type="similarity">
    <text evidence="1">Belongs to the eukaryotic ribosomal protein eL24 family.</text>
</comment>
<keyword id="KW-0479">Metal-binding</keyword>
<keyword id="KW-0687">Ribonucleoprotein</keyword>
<keyword id="KW-0689">Ribosomal protein</keyword>
<keyword id="KW-0694">RNA-binding</keyword>
<keyword id="KW-0699">rRNA-binding</keyword>
<keyword id="KW-0862">Zinc</keyword>
<keyword id="KW-0863">Zinc-finger</keyword>
<accession>B6YWH7</accession>
<dbReference type="EMBL" id="CP000855">
    <property type="protein sequence ID" value="ACJ16440.1"/>
    <property type="molecule type" value="Genomic_DNA"/>
</dbReference>
<dbReference type="RefSeq" id="WP_012571912.1">
    <property type="nucleotide sequence ID" value="NC_011529.1"/>
</dbReference>
<dbReference type="SMR" id="B6YWH7"/>
<dbReference type="STRING" id="523850.TON_0952"/>
<dbReference type="GeneID" id="7017255"/>
<dbReference type="KEGG" id="ton:TON_0952"/>
<dbReference type="PATRIC" id="fig|523850.10.peg.960"/>
<dbReference type="eggNOG" id="arCOG01950">
    <property type="taxonomic scope" value="Archaea"/>
</dbReference>
<dbReference type="HOGENOM" id="CLU_190191_0_0_2"/>
<dbReference type="OrthoDB" id="55506at2157"/>
<dbReference type="Proteomes" id="UP000002727">
    <property type="component" value="Chromosome"/>
</dbReference>
<dbReference type="GO" id="GO:1990904">
    <property type="term" value="C:ribonucleoprotein complex"/>
    <property type="evidence" value="ECO:0007669"/>
    <property type="project" value="UniProtKB-KW"/>
</dbReference>
<dbReference type="GO" id="GO:0005840">
    <property type="term" value="C:ribosome"/>
    <property type="evidence" value="ECO:0007669"/>
    <property type="project" value="UniProtKB-KW"/>
</dbReference>
<dbReference type="GO" id="GO:0019843">
    <property type="term" value="F:rRNA binding"/>
    <property type="evidence" value="ECO:0007669"/>
    <property type="project" value="UniProtKB-UniRule"/>
</dbReference>
<dbReference type="GO" id="GO:0003735">
    <property type="term" value="F:structural constituent of ribosome"/>
    <property type="evidence" value="ECO:0007669"/>
    <property type="project" value="InterPro"/>
</dbReference>
<dbReference type="GO" id="GO:0008270">
    <property type="term" value="F:zinc ion binding"/>
    <property type="evidence" value="ECO:0007669"/>
    <property type="project" value="UniProtKB-UniRule"/>
</dbReference>
<dbReference type="GO" id="GO:0006412">
    <property type="term" value="P:translation"/>
    <property type="evidence" value="ECO:0007669"/>
    <property type="project" value="UniProtKB-UniRule"/>
</dbReference>
<dbReference type="CDD" id="cd00472">
    <property type="entry name" value="Ribosomal_L24e_L24"/>
    <property type="match status" value="1"/>
</dbReference>
<dbReference type="FunFam" id="2.30.170.20:FF:000001">
    <property type="entry name" value="probable ribosome biogenesis protein RLP24"/>
    <property type="match status" value="1"/>
</dbReference>
<dbReference type="Gene3D" id="2.30.170.20">
    <property type="entry name" value="Ribosomal protein L24e"/>
    <property type="match status" value="1"/>
</dbReference>
<dbReference type="HAMAP" id="MF_00773">
    <property type="entry name" value="Ribosomal_eL24"/>
    <property type="match status" value="1"/>
</dbReference>
<dbReference type="InterPro" id="IPR038630">
    <property type="entry name" value="L24e/L24_sf"/>
</dbReference>
<dbReference type="InterPro" id="IPR056366">
    <property type="entry name" value="Ribosomal_eL24"/>
</dbReference>
<dbReference type="InterPro" id="IPR055345">
    <property type="entry name" value="Ribosomal_eL24-rel_arc"/>
</dbReference>
<dbReference type="InterPro" id="IPR000988">
    <property type="entry name" value="Ribosomal_eL24-rel_N"/>
</dbReference>
<dbReference type="InterPro" id="IPR023442">
    <property type="entry name" value="Ribosomal_eL24_CS"/>
</dbReference>
<dbReference type="InterPro" id="IPR011017">
    <property type="entry name" value="TRASH_dom"/>
</dbReference>
<dbReference type="NCBIfam" id="NF034186">
    <property type="entry name" value="PRK14891.1-1"/>
    <property type="match status" value="1"/>
</dbReference>
<dbReference type="PANTHER" id="PTHR10792">
    <property type="entry name" value="60S RIBOSOMAL PROTEIN L24"/>
    <property type="match status" value="1"/>
</dbReference>
<dbReference type="PANTHER" id="PTHR10792:SF1">
    <property type="entry name" value="RIBOSOMAL PROTEIN L24"/>
    <property type="match status" value="1"/>
</dbReference>
<dbReference type="Pfam" id="PF01246">
    <property type="entry name" value="Ribosomal_L24e"/>
    <property type="match status" value="1"/>
</dbReference>
<dbReference type="SMART" id="SM00746">
    <property type="entry name" value="TRASH"/>
    <property type="match status" value="1"/>
</dbReference>
<dbReference type="SUPFAM" id="SSF57716">
    <property type="entry name" value="Glucocorticoid receptor-like (DNA-binding domain)"/>
    <property type="match status" value="1"/>
</dbReference>
<dbReference type="PROSITE" id="PS01073">
    <property type="entry name" value="RIBOSOMAL_L24E"/>
    <property type="match status" value="1"/>
</dbReference>